<proteinExistence type="inferred from homology"/>
<comment type="function">
    <text evidence="1">Catalyzes the reversible transfer of the terminal phosphate group between ATP and AMP. Plays an important role in cellular energy homeostasis and in adenine nucleotide metabolism.</text>
</comment>
<comment type="catalytic activity">
    <reaction evidence="1">
        <text>AMP + ATP = 2 ADP</text>
        <dbReference type="Rhea" id="RHEA:12973"/>
        <dbReference type="ChEBI" id="CHEBI:30616"/>
        <dbReference type="ChEBI" id="CHEBI:456215"/>
        <dbReference type="ChEBI" id="CHEBI:456216"/>
        <dbReference type="EC" id="2.7.4.3"/>
    </reaction>
</comment>
<comment type="pathway">
    <text evidence="1">Purine metabolism; AMP biosynthesis via salvage pathway; AMP from ADP: step 1/1.</text>
</comment>
<comment type="subunit">
    <text evidence="1">Monomer.</text>
</comment>
<comment type="subcellular location">
    <subcellularLocation>
        <location evidence="1">Cytoplasm</location>
    </subcellularLocation>
</comment>
<comment type="domain">
    <text evidence="1">Consists of three domains, a large central CORE domain and two small peripheral domains, NMPbind and LID, which undergo movements during catalysis. The LID domain closes over the site of phosphoryl transfer upon ATP binding. Assembling and dissambling the active center during each catalytic cycle provides an effective means to prevent ATP hydrolysis.</text>
</comment>
<comment type="similarity">
    <text evidence="1">Belongs to the adenylate kinase family.</text>
</comment>
<name>KAD_CHESB</name>
<dbReference type="EC" id="2.7.4.3" evidence="1"/>
<dbReference type="EMBL" id="CP000390">
    <property type="protein sequence ID" value="ABG63052.1"/>
    <property type="molecule type" value="Genomic_DNA"/>
</dbReference>
<dbReference type="SMR" id="Q11HS3"/>
<dbReference type="STRING" id="266779.Meso_1657"/>
<dbReference type="KEGG" id="mes:Meso_1657"/>
<dbReference type="eggNOG" id="COG0563">
    <property type="taxonomic scope" value="Bacteria"/>
</dbReference>
<dbReference type="HOGENOM" id="CLU_032354_4_1_5"/>
<dbReference type="OrthoDB" id="9805030at2"/>
<dbReference type="UniPathway" id="UPA00588">
    <property type="reaction ID" value="UER00649"/>
</dbReference>
<dbReference type="GO" id="GO:0005737">
    <property type="term" value="C:cytoplasm"/>
    <property type="evidence" value="ECO:0007669"/>
    <property type="project" value="UniProtKB-SubCell"/>
</dbReference>
<dbReference type="GO" id="GO:0004017">
    <property type="term" value="F:adenylate kinase activity"/>
    <property type="evidence" value="ECO:0007669"/>
    <property type="project" value="UniProtKB-UniRule"/>
</dbReference>
<dbReference type="GO" id="GO:0005524">
    <property type="term" value="F:ATP binding"/>
    <property type="evidence" value="ECO:0007669"/>
    <property type="project" value="UniProtKB-UniRule"/>
</dbReference>
<dbReference type="GO" id="GO:0044209">
    <property type="term" value="P:AMP salvage"/>
    <property type="evidence" value="ECO:0007669"/>
    <property type="project" value="UniProtKB-UniRule"/>
</dbReference>
<dbReference type="CDD" id="cd01428">
    <property type="entry name" value="ADK"/>
    <property type="match status" value="1"/>
</dbReference>
<dbReference type="Gene3D" id="3.40.50.300">
    <property type="entry name" value="P-loop containing nucleotide triphosphate hydrolases"/>
    <property type="match status" value="1"/>
</dbReference>
<dbReference type="HAMAP" id="MF_00235">
    <property type="entry name" value="Adenylate_kinase_Adk"/>
    <property type="match status" value="1"/>
</dbReference>
<dbReference type="InterPro" id="IPR006259">
    <property type="entry name" value="Adenyl_kin_sub"/>
</dbReference>
<dbReference type="InterPro" id="IPR000850">
    <property type="entry name" value="Adenylat/UMP-CMP_kin"/>
</dbReference>
<dbReference type="InterPro" id="IPR033690">
    <property type="entry name" value="Adenylat_kinase_CS"/>
</dbReference>
<dbReference type="InterPro" id="IPR027417">
    <property type="entry name" value="P-loop_NTPase"/>
</dbReference>
<dbReference type="NCBIfam" id="TIGR01351">
    <property type="entry name" value="adk"/>
    <property type="match status" value="1"/>
</dbReference>
<dbReference type="NCBIfam" id="NF001381">
    <property type="entry name" value="PRK00279.1-3"/>
    <property type="match status" value="1"/>
</dbReference>
<dbReference type="NCBIfam" id="NF011100">
    <property type="entry name" value="PRK14527.1"/>
    <property type="match status" value="1"/>
</dbReference>
<dbReference type="NCBIfam" id="NF011101">
    <property type="entry name" value="PRK14528.1"/>
    <property type="match status" value="1"/>
</dbReference>
<dbReference type="NCBIfam" id="NF011104">
    <property type="entry name" value="PRK14531.1"/>
    <property type="match status" value="1"/>
</dbReference>
<dbReference type="NCBIfam" id="NF011105">
    <property type="entry name" value="PRK14532.1"/>
    <property type="match status" value="1"/>
</dbReference>
<dbReference type="PANTHER" id="PTHR23359">
    <property type="entry name" value="NUCLEOTIDE KINASE"/>
    <property type="match status" value="1"/>
</dbReference>
<dbReference type="Pfam" id="PF00406">
    <property type="entry name" value="ADK"/>
    <property type="match status" value="1"/>
</dbReference>
<dbReference type="PRINTS" id="PR00094">
    <property type="entry name" value="ADENYLTKNASE"/>
</dbReference>
<dbReference type="SUPFAM" id="SSF52540">
    <property type="entry name" value="P-loop containing nucleoside triphosphate hydrolases"/>
    <property type="match status" value="1"/>
</dbReference>
<dbReference type="PROSITE" id="PS00113">
    <property type="entry name" value="ADENYLATE_KINASE"/>
    <property type="match status" value="1"/>
</dbReference>
<gene>
    <name evidence="1" type="primary">adk</name>
    <name type="ordered locus">Meso_1657</name>
</gene>
<keyword id="KW-0067">ATP-binding</keyword>
<keyword id="KW-0963">Cytoplasm</keyword>
<keyword id="KW-0418">Kinase</keyword>
<keyword id="KW-0545">Nucleotide biosynthesis</keyword>
<keyword id="KW-0547">Nucleotide-binding</keyword>
<keyword id="KW-0808">Transferase</keyword>
<reference key="1">
    <citation type="submission" date="2006-06" db="EMBL/GenBank/DDBJ databases">
        <title>Complete sequence of chromosome of Mesorhizobium sp. BNC1.</title>
        <authorList>
            <consortium name="US DOE Joint Genome Institute"/>
            <person name="Copeland A."/>
            <person name="Lucas S."/>
            <person name="Lapidus A."/>
            <person name="Barry K."/>
            <person name="Detter J.C."/>
            <person name="Glavina del Rio T."/>
            <person name="Hammon N."/>
            <person name="Israni S."/>
            <person name="Dalin E."/>
            <person name="Tice H."/>
            <person name="Pitluck S."/>
            <person name="Chertkov O."/>
            <person name="Brettin T."/>
            <person name="Bruce D."/>
            <person name="Han C."/>
            <person name="Tapia R."/>
            <person name="Gilna P."/>
            <person name="Schmutz J."/>
            <person name="Larimer F."/>
            <person name="Land M."/>
            <person name="Hauser L."/>
            <person name="Kyrpides N."/>
            <person name="Mikhailova N."/>
            <person name="Richardson P."/>
        </authorList>
    </citation>
    <scope>NUCLEOTIDE SEQUENCE [LARGE SCALE GENOMIC DNA]</scope>
    <source>
        <strain>BNC1</strain>
    </source>
</reference>
<evidence type="ECO:0000255" key="1">
    <source>
        <dbReference type="HAMAP-Rule" id="MF_00235"/>
    </source>
</evidence>
<accession>Q11HS3</accession>
<sequence>MRLILLGPPGAGKGTQAQILVEKLHIPQLSTGDMLRAAVKAETEIGKKAKAVMDAGELVSDAIVNAIVAERIDQPDCANGFILDGYPRTLAQADAVEAMLGERGLKLDAVIELVVDDKALVGRIMKRAEDAQAAGQPVRRDDNPEVFEERLREYYKKTAPLVGYYYAKGLLKGVDGMASIDEVTRQIEGILAKA</sequence>
<protein>
    <recommendedName>
        <fullName evidence="1">Adenylate kinase</fullName>
        <shortName evidence="1">AK</shortName>
        <ecNumber evidence="1">2.7.4.3</ecNumber>
    </recommendedName>
    <alternativeName>
        <fullName evidence="1">ATP-AMP transphosphorylase</fullName>
    </alternativeName>
    <alternativeName>
        <fullName evidence="1">ATP:AMP phosphotransferase</fullName>
    </alternativeName>
    <alternativeName>
        <fullName evidence="1">Adenylate monophosphate kinase</fullName>
    </alternativeName>
</protein>
<feature type="chain" id="PRO_1000058851" description="Adenylate kinase">
    <location>
        <begin position="1"/>
        <end position="194"/>
    </location>
</feature>
<feature type="region of interest" description="NMP" evidence="1">
    <location>
        <begin position="30"/>
        <end position="59"/>
    </location>
</feature>
<feature type="region of interest" description="LID" evidence="1">
    <location>
        <begin position="126"/>
        <end position="142"/>
    </location>
</feature>
<feature type="binding site" evidence="1">
    <location>
        <begin position="10"/>
        <end position="15"/>
    </location>
    <ligand>
        <name>ATP</name>
        <dbReference type="ChEBI" id="CHEBI:30616"/>
    </ligand>
</feature>
<feature type="binding site" evidence="1">
    <location>
        <position position="31"/>
    </location>
    <ligand>
        <name>AMP</name>
        <dbReference type="ChEBI" id="CHEBI:456215"/>
    </ligand>
</feature>
<feature type="binding site" evidence="1">
    <location>
        <position position="36"/>
    </location>
    <ligand>
        <name>AMP</name>
        <dbReference type="ChEBI" id="CHEBI:456215"/>
    </ligand>
</feature>
<feature type="binding site" evidence="1">
    <location>
        <begin position="57"/>
        <end position="59"/>
    </location>
    <ligand>
        <name>AMP</name>
        <dbReference type="ChEBI" id="CHEBI:456215"/>
    </ligand>
</feature>
<feature type="binding site" evidence="1">
    <location>
        <begin position="85"/>
        <end position="88"/>
    </location>
    <ligand>
        <name>AMP</name>
        <dbReference type="ChEBI" id="CHEBI:456215"/>
    </ligand>
</feature>
<feature type="binding site" evidence="1">
    <location>
        <position position="92"/>
    </location>
    <ligand>
        <name>AMP</name>
        <dbReference type="ChEBI" id="CHEBI:456215"/>
    </ligand>
</feature>
<feature type="binding site" evidence="1">
    <location>
        <position position="127"/>
    </location>
    <ligand>
        <name>ATP</name>
        <dbReference type="ChEBI" id="CHEBI:30616"/>
    </ligand>
</feature>
<feature type="binding site" evidence="1">
    <location>
        <position position="139"/>
    </location>
    <ligand>
        <name>AMP</name>
        <dbReference type="ChEBI" id="CHEBI:456215"/>
    </ligand>
</feature>
<feature type="binding site" evidence="1">
    <location>
        <position position="150"/>
    </location>
    <ligand>
        <name>AMP</name>
        <dbReference type="ChEBI" id="CHEBI:456215"/>
    </ligand>
</feature>
<feature type="binding site" evidence="1">
    <location>
        <position position="178"/>
    </location>
    <ligand>
        <name>ATP</name>
        <dbReference type="ChEBI" id="CHEBI:30616"/>
    </ligand>
</feature>
<organism>
    <name type="scientific">Chelativorans sp. (strain BNC1)</name>
    <dbReference type="NCBI Taxonomy" id="266779"/>
    <lineage>
        <taxon>Bacteria</taxon>
        <taxon>Pseudomonadati</taxon>
        <taxon>Pseudomonadota</taxon>
        <taxon>Alphaproteobacteria</taxon>
        <taxon>Hyphomicrobiales</taxon>
        <taxon>Phyllobacteriaceae</taxon>
        <taxon>Chelativorans</taxon>
    </lineage>
</organism>